<reference key="1">
    <citation type="journal article" date="2002" name="Proc. Natl. Acad. Sci. U.S.A.">
        <title>The complete genome sequence of Chlorobium tepidum TLS, a photosynthetic, anaerobic, green-sulfur bacterium.</title>
        <authorList>
            <person name="Eisen J.A."/>
            <person name="Nelson K.E."/>
            <person name="Paulsen I.T."/>
            <person name="Heidelberg J.F."/>
            <person name="Wu M."/>
            <person name="Dodson R.J."/>
            <person name="DeBoy R.T."/>
            <person name="Gwinn M.L."/>
            <person name="Nelson W.C."/>
            <person name="Haft D.H."/>
            <person name="Hickey E.K."/>
            <person name="Peterson J.D."/>
            <person name="Durkin A.S."/>
            <person name="Kolonay J.F."/>
            <person name="Yang F."/>
            <person name="Holt I.E."/>
            <person name="Umayam L.A."/>
            <person name="Mason T.M."/>
            <person name="Brenner M."/>
            <person name="Shea T.P."/>
            <person name="Parksey D.S."/>
            <person name="Nierman W.C."/>
            <person name="Feldblyum T.V."/>
            <person name="Hansen C.L."/>
            <person name="Craven M.B."/>
            <person name="Radune D."/>
            <person name="Vamathevan J.J."/>
            <person name="Khouri H.M."/>
            <person name="White O."/>
            <person name="Gruber T.M."/>
            <person name="Ketchum K.A."/>
            <person name="Venter J.C."/>
            <person name="Tettelin H."/>
            <person name="Bryant D.A."/>
            <person name="Fraser C.M."/>
        </authorList>
    </citation>
    <scope>NUCLEOTIDE SEQUENCE [LARGE SCALE GENOMIC DNA]</scope>
    <source>
        <strain>ATCC 49652 / DSM 12025 / NBRC 103806 / TLS</strain>
    </source>
</reference>
<comment type="function">
    <text evidence="1">Functions in the biosynthesis of branched-chain amino acids. Catalyzes the dehydration of (2R,3R)-2,3-dihydroxy-3-methylpentanoate (2,3-dihydroxy-3-methylvalerate) into 2-oxo-3-methylpentanoate (2-oxo-3-methylvalerate) and of (2R)-2,3-dihydroxy-3-methylbutanoate (2,3-dihydroxyisovalerate) into 2-oxo-3-methylbutanoate (2-oxoisovalerate), the penultimate precursor to L-isoleucine and L-valine, respectively.</text>
</comment>
<comment type="catalytic activity">
    <reaction evidence="1">
        <text>(2R)-2,3-dihydroxy-3-methylbutanoate = 3-methyl-2-oxobutanoate + H2O</text>
        <dbReference type="Rhea" id="RHEA:24809"/>
        <dbReference type="ChEBI" id="CHEBI:11851"/>
        <dbReference type="ChEBI" id="CHEBI:15377"/>
        <dbReference type="ChEBI" id="CHEBI:49072"/>
        <dbReference type="EC" id="4.2.1.9"/>
    </reaction>
    <physiologicalReaction direction="left-to-right" evidence="1">
        <dbReference type="Rhea" id="RHEA:24810"/>
    </physiologicalReaction>
</comment>
<comment type="catalytic activity">
    <reaction evidence="1">
        <text>(2R,3R)-2,3-dihydroxy-3-methylpentanoate = (S)-3-methyl-2-oxopentanoate + H2O</text>
        <dbReference type="Rhea" id="RHEA:27694"/>
        <dbReference type="ChEBI" id="CHEBI:15377"/>
        <dbReference type="ChEBI" id="CHEBI:35146"/>
        <dbReference type="ChEBI" id="CHEBI:49258"/>
        <dbReference type="EC" id="4.2.1.9"/>
    </reaction>
    <physiologicalReaction direction="left-to-right" evidence="1">
        <dbReference type="Rhea" id="RHEA:27695"/>
    </physiologicalReaction>
</comment>
<comment type="cofactor">
    <cofactor evidence="1">
        <name>[2Fe-2S] cluster</name>
        <dbReference type="ChEBI" id="CHEBI:190135"/>
    </cofactor>
    <text evidence="1">Binds 1 [2Fe-2S] cluster per subunit. This cluster acts as a Lewis acid cofactor.</text>
</comment>
<comment type="cofactor">
    <cofactor evidence="1">
        <name>Mg(2+)</name>
        <dbReference type="ChEBI" id="CHEBI:18420"/>
    </cofactor>
</comment>
<comment type="pathway">
    <text evidence="1">Amino-acid biosynthesis; L-isoleucine biosynthesis; L-isoleucine from 2-oxobutanoate: step 3/4.</text>
</comment>
<comment type="pathway">
    <text evidence="1">Amino-acid biosynthesis; L-valine biosynthesis; L-valine from pyruvate: step 3/4.</text>
</comment>
<comment type="subunit">
    <text evidence="1">Homodimer.</text>
</comment>
<comment type="similarity">
    <text evidence="1">Belongs to the IlvD/Edd family.</text>
</comment>
<proteinExistence type="inferred from homology"/>
<dbReference type="EC" id="4.2.1.9" evidence="1"/>
<dbReference type="EMBL" id="AE006470">
    <property type="protein sequence ID" value="AAM71861.1"/>
    <property type="molecule type" value="Genomic_DNA"/>
</dbReference>
<dbReference type="RefSeq" id="NP_661519.1">
    <property type="nucleotide sequence ID" value="NC_002932.3"/>
</dbReference>
<dbReference type="RefSeq" id="WP_010932306.1">
    <property type="nucleotide sequence ID" value="NC_002932.3"/>
</dbReference>
<dbReference type="SMR" id="Q8KER4"/>
<dbReference type="STRING" id="194439.CT0619"/>
<dbReference type="EnsemblBacteria" id="AAM71861">
    <property type="protein sequence ID" value="AAM71861"/>
    <property type="gene ID" value="CT0619"/>
</dbReference>
<dbReference type="KEGG" id="cte:CT0619"/>
<dbReference type="PATRIC" id="fig|194439.7.peg.576"/>
<dbReference type="eggNOG" id="COG0129">
    <property type="taxonomic scope" value="Bacteria"/>
</dbReference>
<dbReference type="HOGENOM" id="CLU_014271_4_2_10"/>
<dbReference type="OrthoDB" id="9807077at2"/>
<dbReference type="UniPathway" id="UPA00047">
    <property type="reaction ID" value="UER00057"/>
</dbReference>
<dbReference type="UniPathway" id="UPA00049">
    <property type="reaction ID" value="UER00061"/>
</dbReference>
<dbReference type="Proteomes" id="UP000001007">
    <property type="component" value="Chromosome"/>
</dbReference>
<dbReference type="GO" id="GO:0005829">
    <property type="term" value="C:cytosol"/>
    <property type="evidence" value="ECO:0007669"/>
    <property type="project" value="TreeGrafter"/>
</dbReference>
<dbReference type="GO" id="GO:0051537">
    <property type="term" value="F:2 iron, 2 sulfur cluster binding"/>
    <property type="evidence" value="ECO:0007669"/>
    <property type="project" value="UniProtKB-UniRule"/>
</dbReference>
<dbReference type="GO" id="GO:0004160">
    <property type="term" value="F:dihydroxy-acid dehydratase activity"/>
    <property type="evidence" value="ECO:0007669"/>
    <property type="project" value="UniProtKB-UniRule"/>
</dbReference>
<dbReference type="GO" id="GO:0000287">
    <property type="term" value="F:magnesium ion binding"/>
    <property type="evidence" value="ECO:0007669"/>
    <property type="project" value="UniProtKB-UniRule"/>
</dbReference>
<dbReference type="GO" id="GO:0009097">
    <property type="term" value="P:isoleucine biosynthetic process"/>
    <property type="evidence" value="ECO:0007669"/>
    <property type="project" value="UniProtKB-UniRule"/>
</dbReference>
<dbReference type="GO" id="GO:0009099">
    <property type="term" value="P:L-valine biosynthetic process"/>
    <property type="evidence" value="ECO:0007669"/>
    <property type="project" value="UniProtKB-UniRule"/>
</dbReference>
<dbReference type="FunFam" id="3.50.30.80:FF:000001">
    <property type="entry name" value="Dihydroxy-acid dehydratase"/>
    <property type="match status" value="1"/>
</dbReference>
<dbReference type="Gene3D" id="3.50.30.80">
    <property type="entry name" value="IlvD/EDD C-terminal domain-like"/>
    <property type="match status" value="1"/>
</dbReference>
<dbReference type="HAMAP" id="MF_00012">
    <property type="entry name" value="IlvD"/>
    <property type="match status" value="1"/>
</dbReference>
<dbReference type="InterPro" id="IPR042096">
    <property type="entry name" value="Dihydro-acid_dehy_C"/>
</dbReference>
<dbReference type="InterPro" id="IPR004404">
    <property type="entry name" value="DihydroxyA_deHydtase"/>
</dbReference>
<dbReference type="InterPro" id="IPR020558">
    <property type="entry name" value="DiOHA_6PGluconate_deHydtase_CS"/>
</dbReference>
<dbReference type="InterPro" id="IPR056740">
    <property type="entry name" value="ILV_EDD_C"/>
</dbReference>
<dbReference type="InterPro" id="IPR000581">
    <property type="entry name" value="ILV_EDD_N"/>
</dbReference>
<dbReference type="InterPro" id="IPR037237">
    <property type="entry name" value="IlvD/EDD_N"/>
</dbReference>
<dbReference type="NCBIfam" id="TIGR00110">
    <property type="entry name" value="ilvD"/>
    <property type="match status" value="1"/>
</dbReference>
<dbReference type="NCBIfam" id="NF002068">
    <property type="entry name" value="PRK00911.1"/>
    <property type="match status" value="1"/>
</dbReference>
<dbReference type="PANTHER" id="PTHR43661">
    <property type="entry name" value="D-XYLONATE DEHYDRATASE"/>
    <property type="match status" value="1"/>
</dbReference>
<dbReference type="PANTHER" id="PTHR43661:SF3">
    <property type="entry name" value="D-XYLONATE DEHYDRATASE YAGF-RELATED"/>
    <property type="match status" value="1"/>
</dbReference>
<dbReference type="Pfam" id="PF24877">
    <property type="entry name" value="ILV_EDD_C"/>
    <property type="match status" value="1"/>
</dbReference>
<dbReference type="Pfam" id="PF00920">
    <property type="entry name" value="ILVD_EDD_N"/>
    <property type="match status" value="1"/>
</dbReference>
<dbReference type="SUPFAM" id="SSF143975">
    <property type="entry name" value="IlvD/EDD N-terminal domain-like"/>
    <property type="match status" value="1"/>
</dbReference>
<dbReference type="SUPFAM" id="SSF52016">
    <property type="entry name" value="LeuD/IlvD-like"/>
    <property type="match status" value="1"/>
</dbReference>
<dbReference type="PROSITE" id="PS00886">
    <property type="entry name" value="ILVD_EDD_1"/>
    <property type="match status" value="1"/>
</dbReference>
<dbReference type="PROSITE" id="PS00887">
    <property type="entry name" value="ILVD_EDD_2"/>
    <property type="match status" value="1"/>
</dbReference>
<sequence length="560" mass="58916">MRSDTIKKGFEKAPHRSLLKATGCVSTRDDFSKPFIGICNSFNELIPGHAHLQELGRIAKEAVREAGGVPFEFNTIGVCDGIAMGHVGMRYSLASRELIADSVETVVEAHRLDGLVCIPNCDKITPGMMMGALRTNVPVVFVSGGPMKAGHTPSGKTVDLISVFEAVGKCSTGEITEDELQTVEECGCPGCGSCSGMFTANSMNCLCEALGFALPGNGTILAADPRRNELVKAAAGRIIDLVKKEVRPRQILTRTSMLNAFALDLAMGGSTNTILHTLAIASEAELDFDFSELNDLSAKTPYICKVSPATTEVHIEDVDRAGGISAILKELSKVEGLLDLSAPTVTGKTLGENIASAEVLDRTVIRSVEEPYSTTGGLAVLYGNLAPNGAVVKTGAVSPAMMKHTGPAKVYDCQDDAIAGIMNGDVKSGDVVVIRYEGPRGGPGMPEMLSPTSAIIGRGLGDSVALITDGRFSGGSRGACVGHVSPEAADRGPIAAVQTGDMITIDIPARSMTVALDDETIRQRIEALPKFEPKIKKGYLARYARMVTSANTGAVLKNDF</sequence>
<gene>
    <name evidence="1" type="primary">ilvD</name>
    <name type="ordered locus">CT0619</name>
</gene>
<accession>Q8KER4</accession>
<name>ILVD_CHLTE</name>
<feature type="chain" id="PRO_0000103457" description="Dihydroxy-acid dehydratase">
    <location>
        <begin position="1"/>
        <end position="560"/>
    </location>
</feature>
<feature type="active site" description="Proton acceptor" evidence="1">
    <location>
        <position position="473"/>
    </location>
</feature>
<feature type="binding site" evidence="1">
    <location>
        <position position="80"/>
    </location>
    <ligand>
        <name>Mg(2+)</name>
        <dbReference type="ChEBI" id="CHEBI:18420"/>
    </ligand>
</feature>
<feature type="binding site" evidence="1">
    <location>
        <position position="121"/>
    </location>
    <ligand>
        <name>[2Fe-2S] cluster</name>
        <dbReference type="ChEBI" id="CHEBI:190135"/>
    </ligand>
</feature>
<feature type="binding site" evidence="1">
    <location>
        <position position="122"/>
    </location>
    <ligand>
        <name>Mg(2+)</name>
        <dbReference type="ChEBI" id="CHEBI:18420"/>
    </ligand>
</feature>
<feature type="binding site" description="via carbamate group" evidence="1">
    <location>
        <position position="123"/>
    </location>
    <ligand>
        <name>Mg(2+)</name>
        <dbReference type="ChEBI" id="CHEBI:18420"/>
    </ligand>
</feature>
<feature type="binding site" evidence="1">
    <location>
        <position position="194"/>
    </location>
    <ligand>
        <name>[2Fe-2S] cluster</name>
        <dbReference type="ChEBI" id="CHEBI:190135"/>
    </ligand>
</feature>
<feature type="binding site" evidence="1">
    <location>
        <position position="447"/>
    </location>
    <ligand>
        <name>Mg(2+)</name>
        <dbReference type="ChEBI" id="CHEBI:18420"/>
    </ligand>
</feature>
<feature type="modified residue" description="N6-carboxylysine" evidence="1">
    <location>
        <position position="123"/>
    </location>
</feature>
<protein>
    <recommendedName>
        <fullName evidence="1">Dihydroxy-acid dehydratase</fullName>
        <shortName evidence="1">DAD</shortName>
        <ecNumber evidence="1">4.2.1.9</ecNumber>
    </recommendedName>
</protein>
<keyword id="KW-0001">2Fe-2S</keyword>
<keyword id="KW-0028">Amino-acid biosynthesis</keyword>
<keyword id="KW-0100">Branched-chain amino acid biosynthesis</keyword>
<keyword id="KW-0408">Iron</keyword>
<keyword id="KW-0411">Iron-sulfur</keyword>
<keyword id="KW-0456">Lyase</keyword>
<keyword id="KW-0460">Magnesium</keyword>
<keyword id="KW-0479">Metal-binding</keyword>
<keyword id="KW-1185">Reference proteome</keyword>
<organism>
    <name type="scientific">Chlorobaculum tepidum (strain ATCC 49652 / DSM 12025 / NBRC 103806 / TLS)</name>
    <name type="common">Chlorobium tepidum</name>
    <dbReference type="NCBI Taxonomy" id="194439"/>
    <lineage>
        <taxon>Bacteria</taxon>
        <taxon>Pseudomonadati</taxon>
        <taxon>Chlorobiota</taxon>
        <taxon>Chlorobiia</taxon>
        <taxon>Chlorobiales</taxon>
        <taxon>Chlorobiaceae</taxon>
        <taxon>Chlorobaculum</taxon>
    </lineage>
</organism>
<evidence type="ECO:0000255" key="1">
    <source>
        <dbReference type="HAMAP-Rule" id="MF_00012"/>
    </source>
</evidence>